<gene>
    <name type="primary">fkh-5</name>
    <name type="ORF">F26A1.2</name>
</gene>
<protein>
    <recommendedName>
        <fullName>Putative forkhead-related transcription factor fkh-5</fullName>
    </recommendedName>
</protein>
<sequence>MQYALTVIFQSILFVQCQVGEAAFVISQEHEVSKSISINMTLFPSIKWIIHKSFYLYLTYFVMSQQTLPCFQAADSYNYSHSLPKVQFARFSKYTPQSISYSSTQMYQQKEYSDHITEMTNVHKSRKRKLMVTEDQWGSQITIPKVIQNRPLIEKWFVQKRFKMVKVRNIQRPQLSYQLLSALTCLNSPDGMISTTEIYSFILHHWRYYRYANENWKNSVRHVLCKCQLFDVLQVEGLSRKGNVYKLKRPDNVEKEMIDVKTLGCMQKDSRGIDFYIKMLAGQIGLPRHLFYSIVGNEMPEYAGPENSAIFYHLLSMRKIIPKLETRYFLEHWQMEHKATEPMFFEEFVPYSTSLVSCVENISSYGEGVGPGNDELYDLSDRQIICFHKNIRAYHSLQKRCHKMNYSNWMTPSLIYVQEAVMDKEIVEDDIRNGTIECEGVARKEEAKKNFQDPALISIYN</sequence>
<dbReference type="EMBL" id="BX284603">
    <property type="protein sequence ID" value="CCD66794.2"/>
    <property type="molecule type" value="Genomic_DNA"/>
</dbReference>
<dbReference type="PIR" id="T16161">
    <property type="entry name" value="T16161"/>
</dbReference>
<dbReference type="RefSeq" id="NP_498003.2">
    <property type="nucleotide sequence ID" value="NM_065602.3"/>
</dbReference>
<dbReference type="SMR" id="Q19802"/>
<dbReference type="BioGRID" id="49725">
    <property type="interactions" value="2"/>
</dbReference>
<dbReference type="FunCoup" id="Q19802">
    <property type="interactions" value="308"/>
</dbReference>
<dbReference type="STRING" id="6239.F26A1.2.1"/>
<dbReference type="PaxDb" id="6239-F26A1.2"/>
<dbReference type="EnsemblMetazoa" id="F26A1.2.1">
    <property type="protein sequence ID" value="F26A1.2.1"/>
    <property type="gene ID" value="WBGene00001437"/>
</dbReference>
<dbReference type="GeneID" id="184944"/>
<dbReference type="KEGG" id="cel:CELE_F26A1.2"/>
<dbReference type="UCSC" id="F26A1.2">
    <property type="organism name" value="c. elegans"/>
</dbReference>
<dbReference type="AGR" id="WB:WBGene00001437"/>
<dbReference type="CTD" id="184944"/>
<dbReference type="WormBase" id="F26A1.2">
    <property type="protein sequence ID" value="CE47949"/>
    <property type="gene ID" value="WBGene00001437"/>
    <property type="gene designation" value="fkh-5"/>
</dbReference>
<dbReference type="eggNOG" id="KOG2294">
    <property type="taxonomic scope" value="Eukaryota"/>
</dbReference>
<dbReference type="GeneTree" id="ENSGT00970000197133"/>
<dbReference type="HOGENOM" id="CLU_696844_0_0_1"/>
<dbReference type="InParanoid" id="Q19802"/>
<dbReference type="OrthoDB" id="5875547at2759"/>
<dbReference type="PhylomeDB" id="Q19802"/>
<dbReference type="PRO" id="PR:Q19802"/>
<dbReference type="Proteomes" id="UP000001940">
    <property type="component" value="Chromosome III"/>
</dbReference>
<dbReference type="Bgee" id="WBGene00001437">
    <property type="expression patterns" value="Expressed in embryo and 1 other cell type or tissue"/>
</dbReference>
<dbReference type="GO" id="GO:0005634">
    <property type="term" value="C:nucleus"/>
    <property type="evidence" value="ECO:0000318"/>
    <property type="project" value="GO_Central"/>
</dbReference>
<dbReference type="GO" id="GO:0000987">
    <property type="term" value="F:cis-regulatory region sequence-specific DNA binding"/>
    <property type="evidence" value="ECO:0000318"/>
    <property type="project" value="GO_Central"/>
</dbReference>
<dbReference type="GO" id="GO:0003700">
    <property type="term" value="F:DNA-binding transcription factor activity"/>
    <property type="evidence" value="ECO:0000318"/>
    <property type="project" value="GO_Central"/>
</dbReference>
<dbReference type="GO" id="GO:0000977">
    <property type="term" value="F:RNA polymerase II transcription regulatory region sequence-specific DNA binding"/>
    <property type="evidence" value="ECO:0000314"/>
    <property type="project" value="WormBase"/>
</dbReference>
<dbReference type="GO" id="GO:0006355">
    <property type="term" value="P:regulation of DNA-templated transcription"/>
    <property type="evidence" value="ECO:0000318"/>
    <property type="project" value="GO_Central"/>
</dbReference>
<dbReference type="CDD" id="cd00059">
    <property type="entry name" value="FH_FOX"/>
    <property type="match status" value="1"/>
</dbReference>
<dbReference type="Gene3D" id="1.10.10.10">
    <property type="entry name" value="Winged helix-like DNA-binding domain superfamily/Winged helix DNA-binding domain"/>
    <property type="match status" value="1"/>
</dbReference>
<dbReference type="InterPro" id="IPR001766">
    <property type="entry name" value="Fork_head_dom"/>
</dbReference>
<dbReference type="InterPro" id="IPR047119">
    <property type="entry name" value="FOXN2/3-like"/>
</dbReference>
<dbReference type="InterPro" id="IPR018122">
    <property type="entry name" value="TF_fork_head_CS_1"/>
</dbReference>
<dbReference type="InterPro" id="IPR030456">
    <property type="entry name" value="TF_fork_head_CS_2"/>
</dbReference>
<dbReference type="InterPro" id="IPR036388">
    <property type="entry name" value="WH-like_DNA-bd_sf"/>
</dbReference>
<dbReference type="InterPro" id="IPR036390">
    <property type="entry name" value="WH_DNA-bd_sf"/>
</dbReference>
<dbReference type="PANTHER" id="PTHR13962">
    <property type="entry name" value="FORKHEAD BOX PROTEIN N3-LIKE PROTEIN-RELATED"/>
    <property type="match status" value="1"/>
</dbReference>
<dbReference type="PANTHER" id="PTHR13962:SF17">
    <property type="entry name" value="FORKHEAD BOX PROTEIN N4"/>
    <property type="match status" value="1"/>
</dbReference>
<dbReference type="Pfam" id="PF00250">
    <property type="entry name" value="Forkhead"/>
    <property type="match status" value="1"/>
</dbReference>
<dbReference type="SMART" id="SM00339">
    <property type="entry name" value="FH"/>
    <property type="match status" value="1"/>
</dbReference>
<dbReference type="SUPFAM" id="SSF46785">
    <property type="entry name" value="Winged helix' DNA-binding domain"/>
    <property type="match status" value="1"/>
</dbReference>
<dbReference type="PROSITE" id="PS00657">
    <property type="entry name" value="FORK_HEAD_1"/>
    <property type="match status" value="1"/>
</dbReference>
<dbReference type="PROSITE" id="PS00658">
    <property type="entry name" value="FORK_HEAD_2"/>
    <property type="match status" value="1"/>
</dbReference>
<dbReference type="PROSITE" id="PS50039">
    <property type="entry name" value="FORK_HEAD_3"/>
    <property type="match status" value="1"/>
</dbReference>
<feature type="chain" id="PRO_0000091917" description="Putative forkhead-related transcription factor fkh-5">
    <location>
        <begin position="1"/>
        <end position="461"/>
    </location>
</feature>
<feature type="DNA-binding region" description="Fork-head" evidence="2">
    <location>
        <begin position="171"/>
        <end position="262"/>
    </location>
</feature>
<comment type="function">
    <text evidence="1 4">Transcription factor (By similarity). Binds to DNA sequence motif 5'-CTGTTTCA-3' (PubMed:22819322). Regulates expression of a class of small RNAs, known as 21U-RNAs, perhaps acting redundantly with fkh-4 and fkh-3 (PubMed:22819322).</text>
</comment>
<comment type="subcellular location">
    <subcellularLocation>
        <location evidence="2">Nucleus</location>
    </subcellularLocation>
</comment>
<comment type="developmental stage">
    <text evidence="3">Expressed in most cells of the cleavage stage embryo, apart from a few cells at the posterior pole, from the 20 cell stage to the 200 cell stage (PubMed:12568714). Expressed in a few neurons in the head of young larvae (PubMed:12568714).</text>
</comment>
<comment type="disruption phenotype">
    <text evidence="4">RNAi-mediated knockdown causes significant reduction in the expression of 21U-RNAs, upon simultaneous knockdown of fkh-3 and fkh-4.</text>
</comment>
<name>FKH5_CAEEL</name>
<keyword id="KW-0238">DNA-binding</keyword>
<keyword id="KW-0539">Nucleus</keyword>
<keyword id="KW-1185">Reference proteome</keyword>
<keyword id="KW-0804">Transcription</keyword>
<keyword id="KW-0805">Transcription regulation</keyword>
<organism>
    <name type="scientific">Caenorhabditis elegans</name>
    <dbReference type="NCBI Taxonomy" id="6239"/>
    <lineage>
        <taxon>Eukaryota</taxon>
        <taxon>Metazoa</taxon>
        <taxon>Ecdysozoa</taxon>
        <taxon>Nematoda</taxon>
        <taxon>Chromadorea</taxon>
        <taxon>Rhabditida</taxon>
        <taxon>Rhabditina</taxon>
        <taxon>Rhabditomorpha</taxon>
        <taxon>Rhabditoidea</taxon>
        <taxon>Rhabditidae</taxon>
        <taxon>Peloderinae</taxon>
        <taxon>Caenorhabditis</taxon>
    </lineage>
</organism>
<proteinExistence type="evidence at transcript level"/>
<reference key="1">
    <citation type="journal article" date="1998" name="Science">
        <title>Genome sequence of the nematode C. elegans: a platform for investigating biology.</title>
        <authorList>
            <consortium name="The C. elegans sequencing consortium"/>
        </authorList>
    </citation>
    <scope>NUCLEOTIDE SEQUENCE [LARGE SCALE GENOMIC DNA]</scope>
    <source>
        <strain>Bristol N2</strain>
    </source>
</reference>
<reference key="2">
    <citation type="journal article" date="2003" name="Gene">
        <title>The forkhead gene family of Caenorhabditis elegans.</title>
        <authorList>
            <person name="Hope I.A."/>
            <person name="Mounsey A."/>
            <person name="Bauer P."/>
            <person name="Aslam S."/>
        </authorList>
    </citation>
    <scope>DEVELOPMENTAL STAGE</scope>
</reference>
<reference key="3">
    <citation type="journal article" date="2012" name="Mol. Cell">
        <title>Promoters recognized by forkhead proteins exist for individual 21U-RNAs.</title>
        <authorList>
            <person name="Cecere G."/>
            <person name="Zheng G.X."/>
            <person name="Mansisidor A.R."/>
            <person name="Klymko K.E."/>
            <person name="Grishok A."/>
        </authorList>
    </citation>
    <scope>FUNCTION</scope>
    <scope>DISRUPTION PHENOTYPE</scope>
</reference>
<evidence type="ECO:0000250" key="1">
    <source>
        <dbReference type="UniProtKB" id="Q12948"/>
    </source>
</evidence>
<evidence type="ECO:0000255" key="2">
    <source>
        <dbReference type="PROSITE-ProRule" id="PRU00089"/>
    </source>
</evidence>
<evidence type="ECO:0000269" key="3">
    <source>
    </source>
</evidence>
<evidence type="ECO:0000269" key="4">
    <source>
    </source>
</evidence>
<accession>Q19802</accession>